<protein>
    <recommendedName>
        <fullName evidence="1">Phospho-N-acetylmuramoyl-pentapeptide-transferase</fullName>
        <ecNumber evidence="1">2.7.8.13</ecNumber>
    </recommendedName>
    <alternativeName>
        <fullName evidence="1">UDP-MurNAc-pentapeptide phosphotransferase</fullName>
    </alternativeName>
</protein>
<sequence>MIALLIGAGLALLCALVGTPLFIRLLVRRGYGQFIRDDGPTSHHTKRGTPTMGGTVVVAAVLLSYGLTHLIMFLMNPDSPGPSASALILLFLMVGMGLVGFLDDFIKISRQRSLGLNAKAKLILQAAVGVIFAVLALNFPDESGLAPASTKISLVRDLPWLDLAFGGTVLGAILFVVWSNLIVTAATNGVNLTDGLDGLAAGASVMVFGAYTLMGIWQSNQACGSPREAGSGCYSVRDPLDLALLAAIMSAALVGFLWWNTSPAKIFMGDTGSLAIGGAIAGFAILSRTELLLGIIGGLFVLITLSVIIQVGYFKATGGKRVFKMAPLQHHFELKGWAEVTVVVRFWILGGLFVAVGLGIFYAEWVVLL</sequence>
<reference key="1">
    <citation type="submission" date="2009-01" db="EMBL/GenBank/DDBJ databases">
        <title>Complete sequence of chromosome of Arthrobacter chlorophenolicus A6.</title>
        <authorList>
            <consortium name="US DOE Joint Genome Institute"/>
            <person name="Lucas S."/>
            <person name="Copeland A."/>
            <person name="Lapidus A."/>
            <person name="Glavina del Rio T."/>
            <person name="Tice H."/>
            <person name="Bruce D."/>
            <person name="Goodwin L."/>
            <person name="Pitluck S."/>
            <person name="Goltsman E."/>
            <person name="Clum A."/>
            <person name="Larimer F."/>
            <person name="Land M."/>
            <person name="Hauser L."/>
            <person name="Kyrpides N."/>
            <person name="Mikhailova N."/>
            <person name="Jansson J."/>
            <person name="Richardson P."/>
        </authorList>
    </citation>
    <scope>NUCLEOTIDE SEQUENCE [LARGE SCALE GENOMIC DNA]</scope>
    <source>
        <strain>ATCC 700700 / DSM 12829 / CIP 107037 / JCM 12360 / KCTC 9906 / NCIMB 13794 / A6</strain>
    </source>
</reference>
<dbReference type="EC" id="2.7.8.13" evidence="1"/>
<dbReference type="EMBL" id="CP001341">
    <property type="protein sequence ID" value="ACL39556.1"/>
    <property type="molecule type" value="Genomic_DNA"/>
</dbReference>
<dbReference type="RefSeq" id="WP_015936776.1">
    <property type="nucleotide sequence ID" value="NC_011886.1"/>
</dbReference>
<dbReference type="SMR" id="B8HGW7"/>
<dbReference type="STRING" id="452863.Achl_1568"/>
<dbReference type="KEGG" id="ach:Achl_1568"/>
<dbReference type="eggNOG" id="COG0472">
    <property type="taxonomic scope" value="Bacteria"/>
</dbReference>
<dbReference type="HOGENOM" id="CLU_023982_0_1_11"/>
<dbReference type="OrthoDB" id="9805475at2"/>
<dbReference type="UniPathway" id="UPA00219"/>
<dbReference type="Proteomes" id="UP000002505">
    <property type="component" value="Chromosome"/>
</dbReference>
<dbReference type="GO" id="GO:0005886">
    <property type="term" value="C:plasma membrane"/>
    <property type="evidence" value="ECO:0007669"/>
    <property type="project" value="UniProtKB-SubCell"/>
</dbReference>
<dbReference type="GO" id="GO:0046872">
    <property type="term" value="F:metal ion binding"/>
    <property type="evidence" value="ECO:0007669"/>
    <property type="project" value="UniProtKB-KW"/>
</dbReference>
<dbReference type="GO" id="GO:0008963">
    <property type="term" value="F:phospho-N-acetylmuramoyl-pentapeptide-transferase activity"/>
    <property type="evidence" value="ECO:0007669"/>
    <property type="project" value="UniProtKB-UniRule"/>
</dbReference>
<dbReference type="GO" id="GO:0051992">
    <property type="term" value="F:UDP-N-acetylmuramoyl-L-alanyl-D-glutamyl-meso-2,6-diaminopimelyl-D-alanyl-D-alanine:undecaprenyl-phosphate transferase activity"/>
    <property type="evidence" value="ECO:0007669"/>
    <property type="project" value="RHEA"/>
</dbReference>
<dbReference type="GO" id="GO:0051301">
    <property type="term" value="P:cell division"/>
    <property type="evidence" value="ECO:0007669"/>
    <property type="project" value="UniProtKB-KW"/>
</dbReference>
<dbReference type="GO" id="GO:0071555">
    <property type="term" value="P:cell wall organization"/>
    <property type="evidence" value="ECO:0007669"/>
    <property type="project" value="UniProtKB-KW"/>
</dbReference>
<dbReference type="GO" id="GO:0009252">
    <property type="term" value="P:peptidoglycan biosynthetic process"/>
    <property type="evidence" value="ECO:0007669"/>
    <property type="project" value="UniProtKB-UniRule"/>
</dbReference>
<dbReference type="GO" id="GO:0008360">
    <property type="term" value="P:regulation of cell shape"/>
    <property type="evidence" value="ECO:0007669"/>
    <property type="project" value="UniProtKB-KW"/>
</dbReference>
<dbReference type="CDD" id="cd06852">
    <property type="entry name" value="GT_MraY"/>
    <property type="match status" value="1"/>
</dbReference>
<dbReference type="HAMAP" id="MF_00038">
    <property type="entry name" value="MraY"/>
    <property type="match status" value="1"/>
</dbReference>
<dbReference type="InterPro" id="IPR000715">
    <property type="entry name" value="Glycosyl_transferase_4"/>
</dbReference>
<dbReference type="InterPro" id="IPR003524">
    <property type="entry name" value="PNAcMuramoyl-5peptid_Trfase"/>
</dbReference>
<dbReference type="InterPro" id="IPR018480">
    <property type="entry name" value="PNAcMuramoyl-5peptid_Trfase_CS"/>
</dbReference>
<dbReference type="NCBIfam" id="TIGR00445">
    <property type="entry name" value="mraY"/>
    <property type="match status" value="1"/>
</dbReference>
<dbReference type="PANTHER" id="PTHR22926">
    <property type="entry name" value="PHOSPHO-N-ACETYLMURAMOYL-PENTAPEPTIDE-TRANSFERASE"/>
    <property type="match status" value="1"/>
</dbReference>
<dbReference type="PANTHER" id="PTHR22926:SF5">
    <property type="entry name" value="PHOSPHO-N-ACETYLMURAMOYL-PENTAPEPTIDE-TRANSFERASE HOMOLOG"/>
    <property type="match status" value="1"/>
</dbReference>
<dbReference type="Pfam" id="PF00953">
    <property type="entry name" value="Glycos_transf_4"/>
    <property type="match status" value="1"/>
</dbReference>
<dbReference type="Pfam" id="PF10555">
    <property type="entry name" value="MraY_sig1"/>
    <property type="match status" value="1"/>
</dbReference>
<dbReference type="PROSITE" id="PS01348">
    <property type="entry name" value="MRAY_2"/>
    <property type="match status" value="1"/>
</dbReference>
<keyword id="KW-0131">Cell cycle</keyword>
<keyword id="KW-0132">Cell division</keyword>
<keyword id="KW-1003">Cell membrane</keyword>
<keyword id="KW-0133">Cell shape</keyword>
<keyword id="KW-0961">Cell wall biogenesis/degradation</keyword>
<keyword id="KW-0460">Magnesium</keyword>
<keyword id="KW-0472">Membrane</keyword>
<keyword id="KW-0479">Metal-binding</keyword>
<keyword id="KW-0573">Peptidoglycan synthesis</keyword>
<keyword id="KW-0808">Transferase</keyword>
<keyword id="KW-0812">Transmembrane</keyword>
<keyword id="KW-1133">Transmembrane helix</keyword>
<feature type="chain" id="PRO_1000117159" description="Phospho-N-acetylmuramoyl-pentapeptide-transferase">
    <location>
        <begin position="1"/>
        <end position="369"/>
    </location>
</feature>
<feature type="transmembrane region" description="Helical" evidence="1">
    <location>
        <begin position="2"/>
        <end position="22"/>
    </location>
</feature>
<feature type="transmembrane region" description="Helical" evidence="1">
    <location>
        <begin position="55"/>
        <end position="75"/>
    </location>
</feature>
<feature type="transmembrane region" description="Helical" evidence="1">
    <location>
        <begin position="86"/>
        <end position="106"/>
    </location>
</feature>
<feature type="transmembrane region" description="Helical" evidence="1">
    <location>
        <begin position="120"/>
        <end position="140"/>
    </location>
</feature>
<feature type="transmembrane region" description="Helical" evidence="1">
    <location>
        <begin position="163"/>
        <end position="183"/>
    </location>
</feature>
<feature type="transmembrane region" description="Helical" evidence="1">
    <location>
        <begin position="196"/>
        <end position="216"/>
    </location>
</feature>
<feature type="transmembrane region" description="Helical" evidence="1">
    <location>
        <begin position="239"/>
        <end position="259"/>
    </location>
</feature>
<feature type="transmembrane region" description="Helical" evidence="1">
    <location>
        <begin position="266"/>
        <end position="286"/>
    </location>
</feature>
<feature type="transmembrane region" description="Helical" evidence="1">
    <location>
        <begin position="291"/>
        <end position="311"/>
    </location>
</feature>
<feature type="transmembrane region" description="Helical" evidence="1">
    <location>
        <begin position="348"/>
        <end position="368"/>
    </location>
</feature>
<accession>B8HGW7</accession>
<organism>
    <name type="scientific">Pseudarthrobacter chlorophenolicus (strain ATCC 700700 / DSM 12829 / CIP 107037 / JCM 12360 / KCTC 9906 / NCIMB 13794 / A6)</name>
    <name type="common">Arthrobacter chlorophenolicus</name>
    <dbReference type="NCBI Taxonomy" id="452863"/>
    <lineage>
        <taxon>Bacteria</taxon>
        <taxon>Bacillati</taxon>
        <taxon>Actinomycetota</taxon>
        <taxon>Actinomycetes</taxon>
        <taxon>Micrococcales</taxon>
        <taxon>Micrococcaceae</taxon>
        <taxon>Pseudarthrobacter</taxon>
    </lineage>
</organism>
<comment type="function">
    <text evidence="1">Catalyzes the initial step of the lipid cycle reactions in the biosynthesis of the cell wall peptidoglycan: transfers peptidoglycan precursor phospho-MurNAc-pentapeptide from UDP-MurNAc-pentapeptide onto the lipid carrier undecaprenyl phosphate, yielding undecaprenyl-pyrophosphoryl-MurNAc-pentapeptide, known as lipid I.</text>
</comment>
<comment type="catalytic activity">
    <reaction evidence="1">
        <text>UDP-N-acetyl-alpha-D-muramoyl-L-alanyl-gamma-D-glutamyl-meso-2,6-diaminopimeloyl-D-alanyl-D-alanine + di-trans,octa-cis-undecaprenyl phosphate = di-trans,octa-cis-undecaprenyl diphospho-N-acetyl-alpha-D-muramoyl-L-alanyl-D-glutamyl-meso-2,6-diaminopimeloyl-D-alanyl-D-alanine + UMP</text>
        <dbReference type="Rhea" id="RHEA:28386"/>
        <dbReference type="ChEBI" id="CHEBI:57865"/>
        <dbReference type="ChEBI" id="CHEBI:60392"/>
        <dbReference type="ChEBI" id="CHEBI:61386"/>
        <dbReference type="ChEBI" id="CHEBI:61387"/>
        <dbReference type="EC" id="2.7.8.13"/>
    </reaction>
</comment>
<comment type="cofactor">
    <cofactor evidence="1">
        <name>Mg(2+)</name>
        <dbReference type="ChEBI" id="CHEBI:18420"/>
    </cofactor>
</comment>
<comment type="pathway">
    <text evidence="1">Cell wall biogenesis; peptidoglycan biosynthesis.</text>
</comment>
<comment type="subcellular location">
    <subcellularLocation>
        <location evidence="1">Cell membrane</location>
        <topology evidence="1">Multi-pass membrane protein</topology>
    </subcellularLocation>
</comment>
<comment type="similarity">
    <text evidence="1">Belongs to the glycosyltransferase 4 family. MraY subfamily.</text>
</comment>
<proteinExistence type="inferred from homology"/>
<gene>
    <name evidence="1" type="primary">mraY</name>
    <name type="ordered locus">Achl_1568</name>
</gene>
<name>MRAY_PSECP</name>
<evidence type="ECO:0000255" key="1">
    <source>
        <dbReference type="HAMAP-Rule" id="MF_00038"/>
    </source>
</evidence>